<comment type="subcellular location">
    <subcellularLocation>
        <location evidence="1">Cytoplasm</location>
    </subcellularLocation>
</comment>
<comment type="miscellaneous">
    <text evidence="2">Present with 3990 molecules/cell in log phase SD medium.</text>
</comment>
<comment type="similarity">
    <text evidence="3">Belongs to the SVF1 family.</text>
</comment>
<accession>Q05948</accession>
<accession>D6VYM5</accession>
<feature type="chain" id="PRO_0000247175" description="Uncharacterized SVF1-like protein YLR225C">
    <location>
        <begin position="1"/>
        <end position="407"/>
    </location>
</feature>
<feature type="cross-link" description="Glycyl lysine isopeptide (Lys-Gly) (interchain with G-Cter in ubiquitin)" evidence="4">
    <location>
        <position position="22"/>
    </location>
</feature>
<reference key="1">
    <citation type="journal article" date="1997" name="Nature">
        <title>The nucleotide sequence of Saccharomyces cerevisiae chromosome XII.</title>
        <authorList>
            <person name="Johnston M."/>
            <person name="Hillier L.W."/>
            <person name="Riles L."/>
            <person name="Albermann K."/>
            <person name="Andre B."/>
            <person name="Ansorge W."/>
            <person name="Benes V."/>
            <person name="Brueckner M."/>
            <person name="Delius H."/>
            <person name="Dubois E."/>
            <person name="Duesterhoeft A."/>
            <person name="Entian K.-D."/>
            <person name="Floeth M."/>
            <person name="Goffeau A."/>
            <person name="Hebling U."/>
            <person name="Heumann K."/>
            <person name="Heuss-Neitzel D."/>
            <person name="Hilbert H."/>
            <person name="Hilger F."/>
            <person name="Kleine K."/>
            <person name="Koetter P."/>
            <person name="Louis E.J."/>
            <person name="Messenguy F."/>
            <person name="Mewes H.-W."/>
            <person name="Miosga T."/>
            <person name="Moestl D."/>
            <person name="Mueller-Auer S."/>
            <person name="Nentwich U."/>
            <person name="Obermaier B."/>
            <person name="Piravandi E."/>
            <person name="Pohl T.M."/>
            <person name="Portetelle D."/>
            <person name="Purnelle B."/>
            <person name="Rechmann S."/>
            <person name="Rieger M."/>
            <person name="Rinke M."/>
            <person name="Rose M."/>
            <person name="Scharfe M."/>
            <person name="Scherens B."/>
            <person name="Scholler P."/>
            <person name="Schwager C."/>
            <person name="Schwarz S."/>
            <person name="Underwood A.P."/>
            <person name="Urrestarazu L.A."/>
            <person name="Vandenbol M."/>
            <person name="Verhasselt P."/>
            <person name="Vierendeels F."/>
            <person name="Voet M."/>
            <person name="Volckaert G."/>
            <person name="Voss H."/>
            <person name="Wambutt R."/>
            <person name="Wedler E."/>
            <person name="Wedler H."/>
            <person name="Zimmermann F.K."/>
            <person name="Zollner A."/>
            <person name="Hani J."/>
            <person name="Hoheisel J.D."/>
        </authorList>
    </citation>
    <scope>NUCLEOTIDE SEQUENCE [LARGE SCALE GENOMIC DNA]</scope>
    <source>
        <strain>ATCC 204508 / S288c</strain>
    </source>
</reference>
<reference key="2">
    <citation type="journal article" date="2014" name="G3 (Bethesda)">
        <title>The reference genome sequence of Saccharomyces cerevisiae: Then and now.</title>
        <authorList>
            <person name="Engel S.R."/>
            <person name="Dietrich F.S."/>
            <person name="Fisk D.G."/>
            <person name="Binkley G."/>
            <person name="Balakrishnan R."/>
            <person name="Costanzo M.C."/>
            <person name="Dwight S.S."/>
            <person name="Hitz B.C."/>
            <person name="Karra K."/>
            <person name="Nash R.S."/>
            <person name="Weng S."/>
            <person name="Wong E.D."/>
            <person name="Lloyd P."/>
            <person name="Skrzypek M.S."/>
            <person name="Miyasato S.R."/>
            <person name="Simison M."/>
            <person name="Cherry J.M."/>
        </authorList>
    </citation>
    <scope>GENOME REANNOTATION</scope>
    <source>
        <strain>ATCC 204508 / S288c</strain>
    </source>
</reference>
<reference key="3">
    <citation type="journal article" date="2003" name="Nature">
        <title>Global analysis of protein localization in budding yeast.</title>
        <authorList>
            <person name="Huh W.-K."/>
            <person name="Falvo J.V."/>
            <person name="Gerke L.C."/>
            <person name="Carroll A.S."/>
            <person name="Howson R.W."/>
            <person name="Weissman J.S."/>
            <person name="O'Shea E.K."/>
        </authorList>
    </citation>
    <scope>SUBCELLULAR LOCATION [LARGE SCALE ANALYSIS]</scope>
</reference>
<reference key="4">
    <citation type="journal article" date="2003" name="Nature">
        <title>Global analysis of protein expression in yeast.</title>
        <authorList>
            <person name="Ghaemmaghami S."/>
            <person name="Huh W.-K."/>
            <person name="Bower K."/>
            <person name="Howson R.W."/>
            <person name="Belle A."/>
            <person name="Dephoure N."/>
            <person name="O'Shea E.K."/>
            <person name="Weissman J.S."/>
        </authorList>
    </citation>
    <scope>LEVEL OF PROTEIN EXPRESSION [LARGE SCALE ANALYSIS]</scope>
</reference>
<reference key="5">
    <citation type="journal article" date="2012" name="Proteomics">
        <title>Sites of ubiquitin attachment in Saccharomyces cerevisiae.</title>
        <authorList>
            <person name="Starita L.M."/>
            <person name="Lo R.S."/>
            <person name="Eng J.K."/>
            <person name="von Haller P.D."/>
            <person name="Fields S."/>
        </authorList>
    </citation>
    <scope>UBIQUITINATION [LARGE SCALE ANALYSIS] AT LYS-22</scope>
    <scope>IDENTIFICATION BY MASS SPECTROMETRY [LARGE SCALE ANALYSIS]</scope>
</reference>
<keyword id="KW-0963">Cytoplasm</keyword>
<keyword id="KW-1017">Isopeptide bond</keyword>
<keyword id="KW-1185">Reference proteome</keyword>
<keyword id="KW-0832">Ubl conjugation</keyword>
<proteinExistence type="evidence at protein level"/>
<protein>
    <recommendedName>
        <fullName>Uncharacterized SVF1-like protein YLR225C</fullName>
    </recommendedName>
</protein>
<sequence length="407" mass="46423">MAVAIKKEKTKFAPVKEVLSEKDHANYTKFQDTSKLEWFCRTSNHKKFKSHSLLKAVRNPTETRIETQTLYFTDLTNGKCGLIQLLYSSVMGGIYKGFQLNFKIFKASSEENSEEDIDIWESFKIDNIKDFDTLKVESDNVTFHFVPLENSSSSGFAQLLIKIDIPKGSTSCLLKDLKVDITVNLQEGFIINPDGSNYYLDKSISLEELAKRDSSSTSRKMIRHVFVPRGFCNGTISYKKNDKPVKLDLKDTPMLYLDAVQGLIPNKAASKWNFLCFNGEKRSMMCIEFTTTKEYGSTTVTIWAVSDKDKILEVGSSVNDHAVKFPSTKEDKQNGWKYPTSISFPRGFEESNLRLVNRYDIMSELPAFIRSIAENLANMKPFIYQFCQKSKFDDDEGVSIIESTFIN</sequence>
<evidence type="ECO:0000269" key="1">
    <source>
    </source>
</evidence>
<evidence type="ECO:0000269" key="2">
    <source>
    </source>
</evidence>
<evidence type="ECO:0000305" key="3"/>
<evidence type="ECO:0007744" key="4">
    <source>
    </source>
</evidence>
<dbReference type="EMBL" id="U19027">
    <property type="protein sequence ID" value="AAB67413.1"/>
    <property type="molecule type" value="Genomic_DNA"/>
</dbReference>
<dbReference type="EMBL" id="BK006945">
    <property type="protein sequence ID" value="DAA09541.1"/>
    <property type="molecule type" value="Genomic_DNA"/>
</dbReference>
<dbReference type="PIR" id="S51448">
    <property type="entry name" value="S51448"/>
</dbReference>
<dbReference type="RefSeq" id="NP_013326.1">
    <property type="nucleotide sequence ID" value="NM_001182112.1"/>
</dbReference>
<dbReference type="BioGRID" id="31492">
    <property type="interactions" value="104"/>
</dbReference>
<dbReference type="DIP" id="DIP-4343N"/>
<dbReference type="FunCoup" id="Q05948">
    <property type="interactions" value="51"/>
</dbReference>
<dbReference type="IntAct" id="Q05948">
    <property type="interactions" value="1"/>
</dbReference>
<dbReference type="GlyGen" id="Q05948">
    <property type="glycosylation" value="2 sites, 1 O-linked glycan (2 sites)"/>
</dbReference>
<dbReference type="iPTMnet" id="Q05948"/>
<dbReference type="PaxDb" id="4932-YLR225C"/>
<dbReference type="PeptideAtlas" id="Q05948"/>
<dbReference type="EnsemblFungi" id="YLR225C_mRNA">
    <property type="protein sequence ID" value="YLR225C"/>
    <property type="gene ID" value="YLR225C"/>
</dbReference>
<dbReference type="GeneID" id="850922"/>
<dbReference type="KEGG" id="sce:YLR225C"/>
<dbReference type="AGR" id="SGD:S000004215"/>
<dbReference type="SGD" id="S000004215">
    <property type="gene designation" value="YLR225C"/>
</dbReference>
<dbReference type="VEuPathDB" id="FungiDB:YLR225C"/>
<dbReference type="eggNOG" id="ENOG502QQBB">
    <property type="taxonomic scope" value="Eukaryota"/>
</dbReference>
<dbReference type="GeneTree" id="ENSGT00940000176680"/>
<dbReference type="HOGENOM" id="CLU_030205_0_0_1"/>
<dbReference type="InParanoid" id="Q05948"/>
<dbReference type="OMA" id="IDIWESF"/>
<dbReference type="OrthoDB" id="2590239at2759"/>
<dbReference type="BioCyc" id="YEAST:G3O-32339-MONOMER"/>
<dbReference type="BioGRID-ORCS" id="850922">
    <property type="hits" value="0 hits in 10 CRISPR screens"/>
</dbReference>
<dbReference type="PRO" id="PR:Q05948"/>
<dbReference type="Proteomes" id="UP000002311">
    <property type="component" value="Chromosome XII"/>
</dbReference>
<dbReference type="RNAct" id="Q05948">
    <property type="molecule type" value="protein"/>
</dbReference>
<dbReference type="GO" id="GO:0005737">
    <property type="term" value="C:cytoplasm"/>
    <property type="evidence" value="ECO:0007005"/>
    <property type="project" value="SGD"/>
</dbReference>
<dbReference type="GO" id="GO:0006979">
    <property type="term" value="P:response to oxidative stress"/>
    <property type="evidence" value="ECO:0007669"/>
    <property type="project" value="InterPro"/>
</dbReference>
<dbReference type="InterPro" id="IPR051385">
    <property type="entry name" value="Ceramide-binding_SVF1"/>
</dbReference>
<dbReference type="InterPro" id="IPR033394">
    <property type="entry name" value="Svf1-like_C"/>
</dbReference>
<dbReference type="InterPro" id="IPR013931">
    <property type="entry name" value="Svf1-like_N"/>
</dbReference>
<dbReference type="PANTHER" id="PTHR47107:SF1">
    <property type="entry name" value="CERAMIDE-BINDING PROTEIN SVF1-RELATED"/>
    <property type="match status" value="1"/>
</dbReference>
<dbReference type="PANTHER" id="PTHR47107">
    <property type="entry name" value="SVF1-LIKE PROTEIN YDR222W-RELATED"/>
    <property type="match status" value="1"/>
</dbReference>
<dbReference type="Pfam" id="PF08622">
    <property type="entry name" value="Svf1"/>
    <property type="match status" value="1"/>
</dbReference>
<dbReference type="Pfam" id="PF17187">
    <property type="entry name" value="Svf1_C"/>
    <property type="match status" value="1"/>
</dbReference>
<name>YL225_YEAST</name>
<gene>
    <name type="ordered locus">YLR225C</name>
</gene>
<organism>
    <name type="scientific">Saccharomyces cerevisiae (strain ATCC 204508 / S288c)</name>
    <name type="common">Baker's yeast</name>
    <dbReference type="NCBI Taxonomy" id="559292"/>
    <lineage>
        <taxon>Eukaryota</taxon>
        <taxon>Fungi</taxon>
        <taxon>Dikarya</taxon>
        <taxon>Ascomycota</taxon>
        <taxon>Saccharomycotina</taxon>
        <taxon>Saccharomycetes</taxon>
        <taxon>Saccharomycetales</taxon>
        <taxon>Saccharomycetaceae</taxon>
        <taxon>Saccharomyces</taxon>
    </lineage>
</organism>